<comment type="function">
    <text evidence="1">May play a role in a brassinosteroid-dependent regulation of growth and development.</text>
</comment>
<comment type="subcellular location">
    <subcellularLocation>
        <location>Secreted</location>
    </subcellularLocation>
    <subcellularLocation>
        <location>Secreted</location>
        <location>Extracellular space</location>
    </subcellularLocation>
    <subcellularLocation>
        <location evidence="4">Secreted</location>
        <location evidence="4">Extracellular space</location>
        <location evidence="4">Apoplast</location>
    </subcellularLocation>
</comment>
<comment type="induction">
    <text evidence="3">By brassinolide.</text>
</comment>
<comment type="similarity">
    <text evidence="4">Belongs to the EXORDIUM family.</text>
</comment>
<evidence type="ECO:0000250" key="1"/>
<evidence type="ECO:0000255" key="2"/>
<evidence type="ECO:0000269" key="3">
    <source>
    </source>
</evidence>
<evidence type="ECO:0000305" key="4"/>
<sequence length="363" mass="39641">MSSPATTITFFFFFTLSSFFYITSSLQNNNNNKHTATVNSLNIPSAAAEITLVNPKLPPRSLSLTSSKKFEGSSNLVHLRYHMGPVLSSSPINIYVIWYGQWSRPHKSLIRDFLNSISDAKAPSPSVSEWWRTASLYTDQTGSNVSRSVLIAGEYSDSKYSHGQHLTRLTIQEVIASAARSASFPVDHKNGMYLVLTSHDVTMQDFCRAVCGFHYFTFPSMVGYTMPYAWVGQSGKQCPEVCAYPFALPGYMGHGGPGELRPPNGETGVDGMVSVIGHELAEVVSNPLINAWYAGEDPTAPTEIGDLCEGLYGSGGGGGYIGQVMRDREGKTFNMNGKGGRKFLVQWIWNPNLKACSGPNSVD</sequence>
<gene>
    <name type="primary">EXL5</name>
    <name type="ordered locus">At2g17230</name>
    <name type="ORF">T23A1.9</name>
</gene>
<protein>
    <recommendedName>
        <fullName>Protein EXORDIUM-like 5</fullName>
    </recommendedName>
</protein>
<proteinExistence type="evidence at transcript level"/>
<name>EXOL5_ARATH</name>
<accession>Q9SII5</accession>
<accession>Q8L9J8</accession>
<keyword id="KW-0052">Apoplast</keyword>
<keyword id="KW-0325">Glycoprotein</keyword>
<keyword id="KW-1185">Reference proteome</keyword>
<keyword id="KW-0964">Secreted</keyword>
<keyword id="KW-0732">Signal</keyword>
<feature type="signal peptide" evidence="2">
    <location>
        <begin position="1"/>
        <end position="25"/>
    </location>
</feature>
<feature type="chain" id="PRO_0000430285" description="Protein EXORDIUM-like 5">
    <location>
        <begin position="26"/>
        <end position="363"/>
    </location>
</feature>
<feature type="glycosylation site" description="N-linked (GlcNAc...) asparagine" evidence="2">
    <location>
        <position position="144"/>
    </location>
</feature>
<feature type="sequence conflict" description="In Ref. 4; AAM65928." evidence="4" ref="4">
    <original>Q</original>
    <variation>QNN</variation>
    <location>
        <position position="27"/>
    </location>
</feature>
<dbReference type="EMBL" id="AC007127">
    <property type="protein sequence ID" value="AAD25141.1"/>
    <property type="molecule type" value="Genomic_DNA"/>
</dbReference>
<dbReference type="EMBL" id="CP002685">
    <property type="protein sequence ID" value="AEC06601.1"/>
    <property type="molecule type" value="Genomic_DNA"/>
</dbReference>
<dbReference type="EMBL" id="AY058063">
    <property type="protein sequence ID" value="AAL24171.1"/>
    <property type="molecule type" value="mRNA"/>
</dbReference>
<dbReference type="EMBL" id="AY090303">
    <property type="protein sequence ID" value="AAL90964.1"/>
    <property type="molecule type" value="mRNA"/>
</dbReference>
<dbReference type="EMBL" id="AY088390">
    <property type="protein sequence ID" value="AAM65928.1"/>
    <property type="molecule type" value="mRNA"/>
</dbReference>
<dbReference type="PIR" id="F84549">
    <property type="entry name" value="F84549"/>
</dbReference>
<dbReference type="RefSeq" id="NP_565409.1">
    <property type="nucleotide sequence ID" value="NM_127277.3"/>
</dbReference>
<dbReference type="FunCoup" id="Q9SII5">
    <property type="interactions" value="10"/>
</dbReference>
<dbReference type="STRING" id="3702.Q9SII5"/>
<dbReference type="GlyCosmos" id="Q9SII5">
    <property type="glycosylation" value="1 site, No reported glycans"/>
</dbReference>
<dbReference type="GlyGen" id="Q9SII5">
    <property type="glycosylation" value="2 sites"/>
</dbReference>
<dbReference type="iPTMnet" id="Q9SII5"/>
<dbReference type="PaxDb" id="3702-AT2G17230.1"/>
<dbReference type="ProteomicsDB" id="222269"/>
<dbReference type="EnsemblPlants" id="AT2G17230.1">
    <property type="protein sequence ID" value="AT2G17230.1"/>
    <property type="gene ID" value="AT2G17230"/>
</dbReference>
<dbReference type="GeneID" id="816228"/>
<dbReference type="Gramene" id="AT2G17230.1">
    <property type="protein sequence ID" value="AT2G17230.1"/>
    <property type="gene ID" value="AT2G17230"/>
</dbReference>
<dbReference type="KEGG" id="ath:AT2G17230"/>
<dbReference type="Araport" id="AT2G17230"/>
<dbReference type="TAIR" id="AT2G17230">
    <property type="gene designation" value="EXL5"/>
</dbReference>
<dbReference type="eggNOG" id="ENOG502QQ2C">
    <property type="taxonomic scope" value="Eukaryota"/>
</dbReference>
<dbReference type="HOGENOM" id="CLU_053777_0_0_1"/>
<dbReference type="InParanoid" id="Q9SII5"/>
<dbReference type="OMA" id="KWAPSQK"/>
<dbReference type="PhylomeDB" id="Q9SII5"/>
<dbReference type="PRO" id="PR:Q9SII5"/>
<dbReference type="Proteomes" id="UP000006548">
    <property type="component" value="Chromosome 2"/>
</dbReference>
<dbReference type="ExpressionAtlas" id="Q9SII5">
    <property type="expression patterns" value="baseline and differential"/>
</dbReference>
<dbReference type="GO" id="GO:0048046">
    <property type="term" value="C:apoplast"/>
    <property type="evidence" value="ECO:0007669"/>
    <property type="project" value="UniProtKB-SubCell"/>
</dbReference>
<dbReference type="InterPro" id="IPR006766">
    <property type="entry name" value="EXORDIUM-like"/>
</dbReference>
<dbReference type="PANTHER" id="PTHR31279">
    <property type="entry name" value="PROTEIN EXORDIUM-LIKE 5"/>
    <property type="match status" value="1"/>
</dbReference>
<dbReference type="PANTHER" id="PTHR31279:SF4">
    <property type="entry name" value="PROTEIN EXORDIUM-LIKE 5"/>
    <property type="match status" value="1"/>
</dbReference>
<dbReference type="Pfam" id="PF04674">
    <property type="entry name" value="Phi_1"/>
    <property type="match status" value="1"/>
</dbReference>
<organism>
    <name type="scientific">Arabidopsis thaliana</name>
    <name type="common">Mouse-ear cress</name>
    <dbReference type="NCBI Taxonomy" id="3702"/>
    <lineage>
        <taxon>Eukaryota</taxon>
        <taxon>Viridiplantae</taxon>
        <taxon>Streptophyta</taxon>
        <taxon>Embryophyta</taxon>
        <taxon>Tracheophyta</taxon>
        <taxon>Spermatophyta</taxon>
        <taxon>Magnoliopsida</taxon>
        <taxon>eudicotyledons</taxon>
        <taxon>Gunneridae</taxon>
        <taxon>Pentapetalae</taxon>
        <taxon>rosids</taxon>
        <taxon>malvids</taxon>
        <taxon>Brassicales</taxon>
        <taxon>Brassicaceae</taxon>
        <taxon>Camelineae</taxon>
        <taxon>Arabidopsis</taxon>
    </lineage>
</organism>
<reference key="1">
    <citation type="journal article" date="1999" name="Nature">
        <title>Sequence and analysis of chromosome 2 of the plant Arabidopsis thaliana.</title>
        <authorList>
            <person name="Lin X."/>
            <person name="Kaul S."/>
            <person name="Rounsley S.D."/>
            <person name="Shea T.P."/>
            <person name="Benito M.-I."/>
            <person name="Town C.D."/>
            <person name="Fujii C.Y."/>
            <person name="Mason T.M."/>
            <person name="Bowman C.L."/>
            <person name="Barnstead M.E."/>
            <person name="Feldblyum T.V."/>
            <person name="Buell C.R."/>
            <person name="Ketchum K.A."/>
            <person name="Lee J.J."/>
            <person name="Ronning C.M."/>
            <person name="Koo H.L."/>
            <person name="Moffat K.S."/>
            <person name="Cronin L.A."/>
            <person name="Shen M."/>
            <person name="Pai G."/>
            <person name="Van Aken S."/>
            <person name="Umayam L."/>
            <person name="Tallon L.J."/>
            <person name="Gill J.E."/>
            <person name="Adams M.D."/>
            <person name="Carrera A.J."/>
            <person name="Creasy T.H."/>
            <person name="Goodman H.M."/>
            <person name="Somerville C.R."/>
            <person name="Copenhaver G.P."/>
            <person name="Preuss D."/>
            <person name="Nierman W.C."/>
            <person name="White O."/>
            <person name="Eisen J.A."/>
            <person name="Salzberg S.L."/>
            <person name="Fraser C.M."/>
            <person name="Venter J.C."/>
        </authorList>
    </citation>
    <scope>NUCLEOTIDE SEQUENCE [LARGE SCALE GENOMIC DNA]</scope>
    <source>
        <strain>cv. Columbia</strain>
    </source>
</reference>
<reference key="2">
    <citation type="journal article" date="2017" name="Plant J.">
        <title>Araport11: a complete reannotation of the Arabidopsis thaliana reference genome.</title>
        <authorList>
            <person name="Cheng C.Y."/>
            <person name="Krishnakumar V."/>
            <person name="Chan A.P."/>
            <person name="Thibaud-Nissen F."/>
            <person name="Schobel S."/>
            <person name="Town C.D."/>
        </authorList>
    </citation>
    <scope>GENOME REANNOTATION</scope>
    <source>
        <strain>cv. Columbia</strain>
    </source>
</reference>
<reference key="3">
    <citation type="journal article" date="2003" name="Science">
        <title>Empirical analysis of transcriptional activity in the Arabidopsis genome.</title>
        <authorList>
            <person name="Yamada K."/>
            <person name="Lim J."/>
            <person name="Dale J.M."/>
            <person name="Chen H."/>
            <person name="Shinn P."/>
            <person name="Palm C.J."/>
            <person name="Southwick A.M."/>
            <person name="Wu H.C."/>
            <person name="Kim C.J."/>
            <person name="Nguyen M."/>
            <person name="Pham P.K."/>
            <person name="Cheuk R.F."/>
            <person name="Karlin-Newmann G."/>
            <person name="Liu S.X."/>
            <person name="Lam B."/>
            <person name="Sakano H."/>
            <person name="Wu T."/>
            <person name="Yu G."/>
            <person name="Miranda M."/>
            <person name="Quach H.L."/>
            <person name="Tripp M."/>
            <person name="Chang C.H."/>
            <person name="Lee J.M."/>
            <person name="Toriumi M.J."/>
            <person name="Chan M.M."/>
            <person name="Tang C.C."/>
            <person name="Onodera C.S."/>
            <person name="Deng J.M."/>
            <person name="Akiyama K."/>
            <person name="Ansari Y."/>
            <person name="Arakawa T."/>
            <person name="Banh J."/>
            <person name="Banno F."/>
            <person name="Bowser L."/>
            <person name="Brooks S.Y."/>
            <person name="Carninci P."/>
            <person name="Chao Q."/>
            <person name="Choy N."/>
            <person name="Enju A."/>
            <person name="Goldsmith A.D."/>
            <person name="Gurjal M."/>
            <person name="Hansen N.F."/>
            <person name="Hayashizaki Y."/>
            <person name="Johnson-Hopson C."/>
            <person name="Hsuan V.W."/>
            <person name="Iida K."/>
            <person name="Karnes M."/>
            <person name="Khan S."/>
            <person name="Koesema E."/>
            <person name="Ishida J."/>
            <person name="Jiang P.X."/>
            <person name="Jones T."/>
            <person name="Kawai J."/>
            <person name="Kamiya A."/>
            <person name="Meyers C."/>
            <person name="Nakajima M."/>
            <person name="Narusaka M."/>
            <person name="Seki M."/>
            <person name="Sakurai T."/>
            <person name="Satou M."/>
            <person name="Tamse R."/>
            <person name="Vaysberg M."/>
            <person name="Wallender E.K."/>
            <person name="Wong C."/>
            <person name="Yamamura Y."/>
            <person name="Yuan S."/>
            <person name="Shinozaki K."/>
            <person name="Davis R.W."/>
            <person name="Theologis A."/>
            <person name="Ecker J.R."/>
        </authorList>
    </citation>
    <scope>NUCLEOTIDE SEQUENCE [LARGE SCALE MRNA]</scope>
    <source>
        <strain>cv. Columbia</strain>
    </source>
</reference>
<reference key="4">
    <citation type="submission" date="2002-03" db="EMBL/GenBank/DDBJ databases">
        <title>Full-length cDNA from Arabidopsis thaliana.</title>
        <authorList>
            <person name="Brover V.V."/>
            <person name="Troukhan M.E."/>
            <person name="Alexandrov N.A."/>
            <person name="Lu Y.-P."/>
            <person name="Flavell R.B."/>
            <person name="Feldmann K.A."/>
        </authorList>
    </citation>
    <scope>NUCLEOTIDE SEQUENCE [LARGE SCALE MRNA]</scope>
</reference>
<reference key="5">
    <citation type="journal article" date="2009" name="BMC Plant Biol.">
        <title>The extracellular EXO protein mediates cell expansion in Arabidopsis leaves.</title>
        <authorList>
            <person name="Schroder F."/>
            <person name="Lisso J."/>
            <person name="Lange P."/>
            <person name="Mussig C."/>
        </authorList>
    </citation>
    <scope>INDUCTION BY BRASSINOLIDE</scope>
    <scope>GENE FAMILY</scope>
    <scope>NOMENCLATURE</scope>
</reference>